<protein>
    <recommendedName>
        <fullName evidence="1">Histidine--tRNA ligase</fullName>
        <ecNumber evidence="1">6.1.1.21</ecNumber>
    </recommendedName>
    <alternativeName>
        <fullName evidence="1">Histidyl-tRNA synthetase</fullName>
        <shortName evidence="1">HisRS</shortName>
    </alternativeName>
</protein>
<sequence length="424" mass="47262">MAKNIQAIRGMNDYLPADTAIWQRIESILKQVLSGYGYSEIRMPIVEQTPLFKRAIGEVTDVVEKEMYTFDDRNGESLTLRPEGTAGCVRAGIEHGLLYNQEQRLWYIGPMFRYERPQKGRYRQFHQLGAEVFGLPGPDIDAELILLTARWWRALGIFEHVKLELNSIGSLAARADYREALVAFLEQHVEVLDEDCKRRMYSNPLRVLDSKNPDVQQLLDDAPKLSDYLDEESKQHFAGLCELLDKASIPYTVNERLVRGLDYYNRTVFEWVTHSLGAQGTVCAGGRYDGLVEQLGGRATPAVGFAMGLERLVLLVQAVNADFQVPATVDAYVISSGEGAQSAAMLLAESLRDALPTLKIMTNYGGGNVKKQFTRADKWGARVALMLGESEVAAQQVVVKDLRNGEQETLAQADVAARLALMLG</sequence>
<evidence type="ECO:0000255" key="1">
    <source>
        <dbReference type="HAMAP-Rule" id="MF_00127"/>
    </source>
</evidence>
<evidence type="ECO:0000305" key="2"/>
<reference key="1">
    <citation type="journal article" date="2001" name="Nature">
        <title>Genome sequence of Yersinia pestis, the causative agent of plague.</title>
        <authorList>
            <person name="Parkhill J."/>
            <person name="Wren B.W."/>
            <person name="Thomson N.R."/>
            <person name="Titball R.W."/>
            <person name="Holden M.T.G."/>
            <person name="Prentice M.B."/>
            <person name="Sebaihia M."/>
            <person name="James K.D."/>
            <person name="Churcher C.M."/>
            <person name="Mungall K.L."/>
            <person name="Baker S."/>
            <person name="Basham D."/>
            <person name="Bentley S.D."/>
            <person name="Brooks K."/>
            <person name="Cerdeno-Tarraga A.-M."/>
            <person name="Chillingworth T."/>
            <person name="Cronin A."/>
            <person name="Davies R.M."/>
            <person name="Davis P."/>
            <person name="Dougan G."/>
            <person name="Feltwell T."/>
            <person name="Hamlin N."/>
            <person name="Holroyd S."/>
            <person name="Jagels K."/>
            <person name="Karlyshev A.V."/>
            <person name="Leather S."/>
            <person name="Moule S."/>
            <person name="Oyston P.C.F."/>
            <person name="Quail M.A."/>
            <person name="Rutherford K.M."/>
            <person name="Simmonds M."/>
            <person name="Skelton J."/>
            <person name="Stevens K."/>
            <person name="Whitehead S."/>
            <person name="Barrell B.G."/>
        </authorList>
    </citation>
    <scope>NUCLEOTIDE SEQUENCE [LARGE SCALE GENOMIC DNA]</scope>
    <source>
        <strain>CO-92 / Biovar Orientalis</strain>
    </source>
</reference>
<reference key="2">
    <citation type="journal article" date="2002" name="J. Bacteriol.">
        <title>Genome sequence of Yersinia pestis KIM.</title>
        <authorList>
            <person name="Deng W."/>
            <person name="Burland V."/>
            <person name="Plunkett G. III"/>
            <person name="Boutin A."/>
            <person name="Mayhew G.F."/>
            <person name="Liss P."/>
            <person name="Perna N.T."/>
            <person name="Rose D.J."/>
            <person name="Mau B."/>
            <person name="Zhou S."/>
            <person name="Schwartz D.C."/>
            <person name="Fetherston J.D."/>
            <person name="Lindler L.E."/>
            <person name="Brubaker R.R."/>
            <person name="Plano G.V."/>
            <person name="Straley S.C."/>
            <person name="McDonough K.A."/>
            <person name="Nilles M.L."/>
            <person name="Matson J.S."/>
            <person name="Blattner F.R."/>
            <person name="Perry R.D."/>
        </authorList>
    </citation>
    <scope>NUCLEOTIDE SEQUENCE [LARGE SCALE GENOMIC DNA]</scope>
    <source>
        <strain>KIM10+ / Biovar Mediaevalis</strain>
    </source>
</reference>
<reference key="3">
    <citation type="journal article" date="2004" name="DNA Res.">
        <title>Complete genome sequence of Yersinia pestis strain 91001, an isolate avirulent to humans.</title>
        <authorList>
            <person name="Song Y."/>
            <person name="Tong Z."/>
            <person name="Wang J."/>
            <person name="Wang L."/>
            <person name="Guo Z."/>
            <person name="Han Y."/>
            <person name="Zhang J."/>
            <person name="Pei D."/>
            <person name="Zhou D."/>
            <person name="Qin H."/>
            <person name="Pang X."/>
            <person name="Han Y."/>
            <person name="Zhai J."/>
            <person name="Li M."/>
            <person name="Cui B."/>
            <person name="Qi Z."/>
            <person name="Jin L."/>
            <person name="Dai R."/>
            <person name="Chen F."/>
            <person name="Li S."/>
            <person name="Ye C."/>
            <person name="Du Z."/>
            <person name="Lin W."/>
            <person name="Wang J."/>
            <person name="Yu J."/>
            <person name="Yang H."/>
            <person name="Wang J."/>
            <person name="Huang P."/>
            <person name="Yang R."/>
        </authorList>
    </citation>
    <scope>NUCLEOTIDE SEQUENCE [LARGE SCALE GENOMIC DNA]</scope>
    <source>
        <strain>91001 / Biovar Mediaevalis</strain>
    </source>
</reference>
<organism>
    <name type="scientific">Yersinia pestis</name>
    <dbReference type="NCBI Taxonomy" id="632"/>
    <lineage>
        <taxon>Bacteria</taxon>
        <taxon>Pseudomonadati</taxon>
        <taxon>Pseudomonadota</taxon>
        <taxon>Gammaproteobacteria</taxon>
        <taxon>Enterobacterales</taxon>
        <taxon>Yersiniaceae</taxon>
        <taxon>Yersinia</taxon>
    </lineage>
</organism>
<proteinExistence type="inferred from homology"/>
<dbReference type="EC" id="6.1.1.21" evidence="1"/>
<dbReference type="EMBL" id="AL590842">
    <property type="protein sequence ID" value="CAL21489.1"/>
    <property type="molecule type" value="Genomic_DNA"/>
</dbReference>
<dbReference type="EMBL" id="AE009952">
    <property type="protein sequence ID" value="AAM84927.1"/>
    <property type="molecule type" value="Genomic_DNA"/>
</dbReference>
<dbReference type="EMBL" id="AE017042">
    <property type="protein sequence ID" value="AAS62932.1"/>
    <property type="molecule type" value="Genomic_DNA"/>
</dbReference>
<dbReference type="PIR" id="AF0350">
    <property type="entry name" value="AF0350"/>
</dbReference>
<dbReference type="RefSeq" id="WP_002209816.1">
    <property type="nucleotide sequence ID" value="NZ_WUCM01000067.1"/>
</dbReference>
<dbReference type="RefSeq" id="WP_011055385.1">
    <property type="nucleotide sequence ID" value="NZ_CP162311.1"/>
</dbReference>
<dbReference type="RefSeq" id="YP_002347813.1">
    <property type="nucleotide sequence ID" value="NC_003143.1"/>
</dbReference>
<dbReference type="SMR" id="Q8ZCT6"/>
<dbReference type="IntAct" id="Q8ZCT6">
    <property type="interactions" value="1"/>
</dbReference>
<dbReference type="STRING" id="214092.YPO2878"/>
<dbReference type="PaxDb" id="214092-YPO2878"/>
<dbReference type="DNASU" id="1146301"/>
<dbReference type="EnsemblBacteria" id="AAS62932">
    <property type="protein sequence ID" value="AAS62932"/>
    <property type="gene ID" value="YP_2744"/>
</dbReference>
<dbReference type="GeneID" id="57975836"/>
<dbReference type="KEGG" id="ype:YPO2878"/>
<dbReference type="KEGG" id="ypk:y1354"/>
<dbReference type="KEGG" id="ypm:YP_2744"/>
<dbReference type="PATRIC" id="fig|214092.21.peg.3324"/>
<dbReference type="eggNOG" id="COG0124">
    <property type="taxonomic scope" value="Bacteria"/>
</dbReference>
<dbReference type="HOGENOM" id="CLU_025113_1_1_6"/>
<dbReference type="OMA" id="CGGGNFK"/>
<dbReference type="OrthoDB" id="9800814at2"/>
<dbReference type="Proteomes" id="UP000000815">
    <property type="component" value="Chromosome"/>
</dbReference>
<dbReference type="Proteomes" id="UP000001019">
    <property type="component" value="Chromosome"/>
</dbReference>
<dbReference type="Proteomes" id="UP000002490">
    <property type="component" value="Chromosome"/>
</dbReference>
<dbReference type="GO" id="GO:0005737">
    <property type="term" value="C:cytoplasm"/>
    <property type="evidence" value="ECO:0007669"/>
    <property type="project" value="UniProtKB-SubCell"/>
</dbReference>
<dbReference type="GO" id="GO:0005524">
    <property type="term" value="F:ATP binding"/>
    <property type="evidence" value="ECO:0007669"/>
    <property type="project" value="UniProtKB-UniRule"/>
</dbReference>
<dbReference type="GO" id="GO:0004821">
    <property type="term" value="F:histidine-tRNA ligase activity"/>
    <property type="evidence" value="ECO:0000318"/>
    <property type="project" value="GO_Central"/>
</dbReference>
<dbReference type="GO" id="GO:0006427">
    <property type="term" value="P:histidyl-tRNA aminoacylation"/>
    <property type="evidence" value="ECO:0000318"/>
    <property type="project" value="GO_Central"/>
</dbReference>
<dbReference type="CDD" id="cd00773">
    <property type="entry name" value="HisRS-like_core"/>
    <property type="match status" value="1"/>
</dbReference>
<dbReference type="CDD" id="cd00859">
    <property type="entry name" value="HisRS_anticodon"/>
    <property type="match status" value="1"/>
</dbReference>
<dbReference type="FunFam" id="3.30.930.10:FF:000005">
    <property type="entry name" value="Histidine--tRNA ligase"/>
    <property type="match status" value="1"/>
</dbReference>
<dbReference type="FunFam" id="3.40.50.800:FF:000007">
    <property type="entry name" value="Histidine--tRNA ligase"/>
    <property type="match status" value="1"/>
</dbReference>
<dbReference type="Gene3D" id="3.40.50.800">
    <property type="entry name" value="Anticodon-binding domain"/>
    <property type="match status" value="1"/>
</dbReference>
<dbReference type="Gene3D" id="3.30.930.10">
    <property type="entry name" value="Bira Bifunctional Protein, Domain 2"/>
    <property type="match status" value="1"/>
</dbReference>
<dbReference type="HAMAP" id="MF_00127">
    <property type="entry name" value="His_tRNA_synth"/>
    <property type="match status" value="1"/>
</dbReference>
<dbReference type="InterPro" id="IPR006195">
    <property type="entry name" value="aa-tRNA-synth_II"/>
</dbReference>
<dbReference type="InterPro" id="IPR045864">
    <property type="entry name" value="aa-tRNA-synth_II/BPL/LPL"/>
</dbReference>
<dbReference type="InterPro" id="IPR004154">
    <property type="entry name" value="Anticodon-bd"/>
</dbReference>
<dbReference type="InterPro" id="IPR036621">
    <property type="entry name" value="Anticodon-bd_dom_sf"/>
</dbReference>
<dbReference type="InterPro" id="IPR015807">
    <property type="entry name" value="His-tRNA-ligase"/>
</dbReference>
<dbReference type="InterPro" id="IPR041715">
    <property type="entry name" value="HisRS-like_core"/>
</dbReference>
<dbReference type="InterPro" id="IPR004516">
    <property type="entry name" value="HisRS/HisZ"/>
</dbReference>
<dbReference type="InterPro" id="IPR033656">
    <property type="entry name" value="HisRS_anticodon"/>
</dbReference>
<dbReference type="NCBIfam" id="TIGR00442">
    <property type="entry name" value="hisS"/>
    <property type="match status" value="1"/>
</dbReference>
<dbReference type="PANTHER" id="PTHR43707:SF1">
    <property type="entry name" value="HISTIDINE--TRNA LIGASE, MITOCHONDRIAL-RELATED"/>
    <property type="match status" value="1"/>
</dbReference>
<dbReference type="PANTHER" id="PTHR43707">
    <property type="entry name" value="HISTIDYL-TRNA SYNTHETASE"/>
    <property type="match status" value="1"/>
</dbReference>
<dbReference type="Pfam" id="PF03129">
    <property type="entry name" value="HGTP_anticodon"/>
    <property type="match status" value="1"/>
</dbReference>
<dbReference type="Pfam" id="PF13393">
    <property type="entry name" value="tRNA-synt_His"/>
    <property type="match status" value="1"/>
</dbReference>
<dbReference type="PIRSF" id="PIRSF001549">
    <property type="entry name" value="His-tRNA_synth"/>
    <property type="match status" value="1"/>
</dbReference>
<dbReference type="SUPFAM" id="SSF52954">
    <property type="entry name" value="Class II aaRS ABD-related"/>
    <property type="match status" value="1"/>
</dbReference>
<dbReference type="SUPFAM" id="SSF55681">
    <property type="entry name" value="Class II aaRS and biotin synthetases"/>
    <property type="match status" value="1"/>
</dbReference>
<dbReference type="PROSITE" id="PS50862">
    <property type="entry name" value="AA_TRNA_LIGASE_II"/>
    <property type="match status" value="1"/>
</dbReference>
<gene>
    <name evidence="1" type="primary">hisS</name>
    <name type="ordered locus">YPO2878</name>
    <name type="ordered locus">y1354</name>
    <name type="ordered locus">YP_2744</name>
</gene>
<keyword id="KW-0030">Aminoacyl-tRNA synthetase</keyword>
<keyword id="KW-0067">ATP-binding</keyword>
<keyword id="KW-0963">Cytoplasm</keyword>
<keyword id="KW-0436">Ligase</keyword>
<keyword id="KW-0547">Nucleotide-binding</keyword>
<keyword id="KW-0648">Protein biosynthesis</keyword>
<keyword id="KW-1185">Reference proteome</keyword>
<feature type="chain" id="PRO_0000136305" description="Histidine--tRNA ligase">
    <location>
        <begin position="1"/>
        <end position="424"/>
    </location>
</feature>
<feature type="sequence conflict" description="In Ref. 2; AAM84927." evidence="2" ref="2">
    <original>V</original>
    <variation>A</variation>
    <location>
        <position position="89"/>
    </location>
</feature>
<accession>Q8ZCT6</accession>
<accession>Q0WD25</accession>
<accession>Q8D0Z2</accession>
<name>SYH_YERPE</name>
<comment type="catalytic activity">
    <reaction evidence="1">
        <text>tRNA(His) + L-histidine + ATP = L-histidyl-tRNA(His) + AMP + diphosphate + H(+)</text>
        <dbReference type="Rhea" id="RHEA:17313"/>
        <dbReference type="Rhea" id="RHEA-COMP:9665"/>
        <dbReference type="Rhea" id="RHEA-COMP:9689"/>
        <dbReference type="ChEBI" id="CHEBI:15378"/>
        <dbReference type="ChEBI" id="CHEBI:30616"/>
        <dbReference type="ChEBI" id="CHEBI:33019"/>
        <dbReference type="ChEBI" id="CHEBI:57595"/>
        <dbReference type="ChEBI" id="CHEBI:78442"/>
        <dbReference type="ChEBI" id="CHEBI:78527"/>
        <dbReference type="ChEBI" id="CHEBI:456215"/>
        <dbReference type="EC" id="6.1.1.21"/>
    </reaction>
</comment>
<comment type="subunit">
    <text evidence="1">Homodimer.</text>
</comment>
<comment type="subcellular location">
    <subcellularLocation>
        <location evidence="1">Cytoplasm</location>
    </subcellularLocation>
</comment>
<comment type="similarity">
    <text evidence="1">Belongs to the class-II aminoacyl-tRNA synthetase family.</text>
</comment>